<gene>
    <name evidence="1" type="primary">pyrK</name>
    <name type="ordered locus">Mbar_A1467</name>
</gene>
<proteinExistence type="inferred from homology"/>
<keyword id="KW-0001">2Fe-2S</keyword>
<keyword id="KW-0249">Electron transport</keyword>
<keyword id="KW-0274">FAD</keyword>
<keyword id="KW-0285">Flavoprotein</keyword>
<keyword id="KW-0408">Iron</keyword>
<keyword id="KW-0411">Iron-sulfur</keyword>
<keyword id="KW-0479">Metal-binding</keyword>
<keyword id="KW-0665">Pyrimidine biosynthesis</keyword>
<keyword id="KW-0813">Transport</keyword>
<name>PYRK_METBF</name>
<dbReference type="EMBL" id="CP000099">
    <property type="protein sequence ID" value="AAZ70424.1"/>
    <property type="molecule type" value="Genomic_DNA"/>
</dbReference>
<dbReference type="SMR" id="Q46CG8"/>
<dbReference type="STRING" id="269797.Mbar_A1467"/>
<dbReference type="PaxDb" id="269797-Mbar_A1467"/>
<dbReference type="KEGG" id="mba:Mbar_A1467"/>
<dbReference type="eggNOG" id="arCOG02199">
    <property type="taxonomic scope" value="Archaea"/>
</dbReference>
<dbReference type="HOGENOM" id="CLU_003827_1_1_2"/>
<dbReference type="OrthoDB" id="35401at2157"/>
<dbReference type="UniPathway" id="UPA00070">
    <property type="reaction ID" value="UER00945"/>
</dbReference>
<dbReference type="GO" id="GO:0051537">
    <property type="term" value="F:2 iron, 2 sulfur cluster binding"/>
    <property type="evidence" value="ECO:0007669"/>
    <property type="project" value="UniProtKB-KW"/>
</dbReference>
<dbReference type="GO" id="GO:0009055">
    <property type="term" value="F:electron transfer activity"/>
    <property type="evidence" value="ECO:0007669"/>
    <property type="project" value="UniProtKB-UniRule"/>
</dbReference>
<dbReference type="GO" id="GO:0050660">
    <property type="term" value="F:flavin adenine dinucleotide binding"/>
    <property type="evidence" value="ECO:0007669"/>
    <property type="project" value="InterPro"/>
</dbReference>
<dbReference type="GO" id="GO:0046872">
    <property type="term" value="F:metal ion binding"/>
    <property type="evidence" value="ECO:0007669"/>
    <property type="project" value="UniProtKB-KW"/>
</dbReference>
<dbReference type="GO" id="GO:0016491">
    <property type="term" value="F:oxidoreductase activity"/>
    <property type="evidence" value="ECO:0007669"/>
    <property type="project" value="InterPro"/>
</dbReference>
<dbReference type="GO" id="GO:0044205">
    <property type="term" value="P:'de novo' UMP biosynthetic process"/>
    <property type="evidence" value="ECO:0007669"/>
    <property type="project" value="UniProtKB-UniRule"/>
</dbReference>
<dbReference type="CDD" id="cd06220">
    <property type="entry name" value="DHOD_e_trans_like2"/>
    <property type="match status" value="1"/>
</dbReference>
<dbReference type="Gene3D" id="3.40.50.80">
    <property type="entry name" value="Nucleotide-binding domain of ferredoxin-NADP reductase (FNR) module"/>
    <property type="match status" value="1"/>
</dbReference>
<dbReference type="Gene3D" id="2.40.30.10">
    <property type="entry name" value="Translation factors"/>
    <property type="match status" value="1"/>
</dbReference>
<dbReference type="HAMAP" id="MF_01211">
    <property type="entry name" value="DHODB_Fe_S_bind"/>
    <property type="match status" value="1"/>
</dbReference>
<dbReference type="InterPro" id="IPR012165">
    <property type="entry name" value="Cyt_c3_hydrogenase_gsu"/>
</dbReference>
<dbReference type="InterPro" id="IPR019480">
    <property type="entry name" value="Dihydroorotate_DH_Fe-S-bd"/>
</dbReference>
<dbReference type="InterPro" id="IPR023455">
    <property type="entry name" value="Dihydroorotate_DHASE_ETsu"/>
</dbReference>
<dbReference type="InterPro" id="IPR017927">
    <property type="entry name" value="FAD-bd_FR_type"/>
</dbReference>
<dbReference type="InterPro" id="IPR039261">
    <property type="entry name" value="FNR_nucleotide-bd"/>
</dbReference>
<dbReference type="InterPro" id="IPR001433">
    <property type="entry name" value="OxRdtase_FAD/NAD-bd"/>
</dbReference>
<dbReference type="InterPro" id="IPR050353">
    <property type="entry name" value="PyrK_electron_transfer"/>
</dbReference>
<dbReference type="InterPro" id="IPR017938">
    <property type="entry name" value="Riboflavin_synthase-like_b-brl"/>
</dbReference>
<dbReference type="NCBIfam" id="NF000796">
    <property type="entry name" value="PRK00054.1-1"/>
    <property type="match status" value="1"/>
</dbReference>
<dbReference type="PANTHER" id="PTHR43513">
    <property type="entry name" value="DIHYDROOROTATE DEHYDROGENASE B (NAD(+)), ELECTRON TRANSFER SUBUNIT"/>
    <property type="match status" value="1"/>
</dbReference>
<dbReference type="PANTHER" id="PTHR43513:SF3">
    <property type="entry name" value="DIHYDROOROTATE DEHYDROGENASE B (NAD(+)), ELECTRON TRANSFER SUBUNIT-RELATED"/>
    <property type="match status" value="1"/>
</dbReference>
<dbReference type="Pfam" id="PF10418">
    <property type="entry name" value="DHODB_Fe-S_bind"/>
    <property type="match status" value="1"/>
</dbReference>
<dbReference type="Pfam" id="PF00175">
    <property type="entry name" value="NAD_binding_1"/>
    <property type="match status" value="1"/>
</dbReference>
<dbReference type="PIRSF" id="PIRSF006816">
    <property type="entry name" value="Cyc3_hyd_g"/>
    <property type="match status" value="1"/>
</dbReference>
<dbReference type="SUPFAM" id="SSF52343">
    <property type="entry name" value="Ferredoxin reductase-like, C-terminal NADP-linked domain"/>
    <property type="match status" value="1"/>
</dbReference>
<dbReference type="SUPFAM" id="SSF63380">
    <property type="entry name" value="Riboflavin synthase domain-like"/>
    <property type="match status" value="1"/>
</dbReference>
<dbReference type="PROSITE" id="PS00197">
    <property type="entry name" value="2FE2S_FER_1"/>
    <property type="match status" value="1"/>
</dbReference>
<dbReference type="PROSITE" id="PS51384">
    <property type="entry name" value="FAD_FR"/>
    <property type="match status" value="1"/>
</dbReference>
<reference key="1">
    <citation type="journal article" date="2006" name="J. Bacteriol.">
        <title>The Methanosarcina barkeri genome: comparative analysis with Methanosarcina acetivorans and Methanosarcina mazei reveals extensive rearrangement within methanosarcinal genomes.</title>
        <authorList>
            <person name="Maeder D.L."/>
            <person name="Anderson I."/>
            <person name="Brettin T.S."/>
            <person name="Bruce D.C."/>
            <person name="Gilna P."/>
            <person name="Han C.S."/>
            <person name="Lapidus A."/>
            <person name="Metcalf W.W."/>
            <person name="Saunders E."/>
            <person name="Tapia R."/>
            <person name="Sowers K.R."/>
        </authorList>
    </citation>
    <scope>NUCLEOTIDE SEQUENCE [LARGE SCALE GENOMIC DNA]</scope>
    <source>
        <strain>Fusaro / DSM 804</strain>
    </source>
</reference>
<organism>
    <name type="scientific">Methanosarcina barkeri (strain Fusaro / DSM 804)</name>
    <dbReference type="NCBI Taxonomy" id="269797"/>
    <lineage>
        <taxon>Archaea</taxon>
        <taxon>Methanobacteriati</taxon>
        <taxon>Methanobacteriota</taxon>
        <taxon>Stenosarchaea group</taxon>
        <taxon>Methanomicrobia</taxon>
        <taxon>Methanosarcinales</taxon>
        <taxon>Methanosarcinaceae</taxon>
        <taxon>Methanosarcina</taxon>
    </lineage>
</organism>
<accession>Q46CG8</accession>
<evidence type="ECO:0000255" key="1">
    <source>
        <dbReference type="HAMAP-Rule" id="MF_01211"/>
    </source>
</evidence>
<protein>
    <recommendedName>
        <fullName evidence="1">Probable dihydroorotate dehydrogenase B (NAD(+)), electron transfer subunit</fullName>
    </recommendedName>
    <alternativeName>
        <fullName evidence="1">Dihydroorotate oxidase B, electron transfer subunit</fullName>
    </alternativeName>
</protein>
<feature type="chain" id="PRO_1000066406" description="Probable dihydroorotate dehydrogenase B (NAD(+)), electron transfer subunit">
    <location>
        <begin position="1"/>
        <end position="259"/>
    </location>
</feature>
<feature type="domain" description="FAD-binding FR-type" evidence="1">
    <location>
        <begin position="1"/>
        <end position="89"/>
    </location>
</feature>
<feature type="binding site" evidence="1">
    <location>
        <position position="211"/>
    </location>
    <ligand>
        <name>[2Fe-2S] cluster</name>
        <dbReference type="ChEBI" id="CHEBI:190135"/>
    </ligand>
</feature>
<feature type="binding site" evidence="1">
    <location>
        <position position="216"/>
    </location>
    <ligand>
        <name>[2Fe-2S] cluster</name>
        <dbReference type="ChEBI" id="CHEBI:190135"/>
    </ligand>
</feature>
<feature type="binding site" evidence="1">
    <location>
        <position position="219"/>
    </location>
    <ligand>
        <name>[2Fe-2S] cluster</name>
        <dbReference type="ChEBI" id="CHEBI:190135"/>
    </ligand>
</feature>
<feature type="binding site" evidence="1">
    <location>
        <position position="229"/>
    </location>
    <ligand>
        <name>[2Fe-2S] cluster</name>
        <dbReference type="ChEBI" id="CHEBI:190135"/>
    </ligand>
</feature>
<sequence>MLPLNATIVQINEESPLVRTFFFDFQFETMEPGQFVMVWVRGVDEVPMGLSSKNSITVQKVGEATSKLFELKEGDSFGLRGPFGKGFSLPSEGEKTLIIAGGVGAAPLAPYAEAARSAGSEVHTVLGARSAGDLLFEKRFAEAGKVYISTDDGSKGTKGFVTDVLTDLDLSVYDRIAVCGPEIMISSVFRLLKDRQVLEKSEFSLQRYFKCGIGVCGACCIDKSGLRVCRDGPVFSGVQLLDSELGKYARDASGRRVKI</sequence>
<comment type="function">
    <text evidence="1">Responsible for channeling the electrons from the oxidation of dihydroorotate from the FMN redox center in the PyrD type B subunit to the ultimate electron acceptor NAD(+).</text>
</comment>
<comment type="cofactor">
    <cofactor evidence="1">
        <name>[2Fe-2S] cluster</name>
        <dbReference type="ChEBI" id="CHEBI:190135"/>
    </cofactor>
    <text evidence="1">Binds 1 [2Fe-2S] cluster per subunit.</text>
</comment>
<comment type="cofactor">
    <cofactor evidence="1">
        <name>FAD</name>
        <dbReference type="ChEBI" id="CHEBI:57692"/>
    </cofactor>
    <text evidence="1">Binds 1 FAD per subunit.</text>
</comment>
<comment type="pathway">
    <text evidence="1">Pyrimidine metabolism; UMP biosynthesis via de novo pathway; orotate from (S)-dihydroorotate (NAD(+) route): step 1/1.</text>
</comment>
<comment type="subunit">
    <text evidence="1">Heterotetramer of 2 PyrK and 2 PyrD type B subunits.</text>
</comment>
<comment type="similarity">
    <text evidence="1">Belongs to the PyrK family.</text>
</comment>